<evidence type="ECO:0000255" key="1">
    <source>
        <dbReference type="HAMAP-Rule" id="MF_00402"/>
    </source>
</evidence>
<evidence type="ECO:0000305" key="2"/>
<sequence length="126" mass="14271">MNLIEQLEQEEIARLGKTIPEFAPGDTVVVQVKVKEGNRERLQAYEGVVIAKRNRGLNSGFTVRKISSGEGVERTFQTYSPLVASIEVKRRGDVRRAKLYYLRERSGKSARIKEKLVRKEKPVVAA</sequence>
<proteinExistence type="inferred from homology"/>
<accession>Q47BI8</accession>
<dbReference type="EMBL" id="CP000089">
    <property type="protein sequence ID" value="AAZ47793.1"/>
    <property type="molecule type" value="Genomic_DNA"/>
</dbReference>
<dbReference type="SMR" id="Q47BI8"/>
<dbReference type="STRING" id="159087.Daro_3063"/>
<dbReference type="KEGG" id="dar:Daro_3063"/>
<dbReference type="eggNOG" id="COG0335">
    <property type="taxonomic scope" value="Bacteria"/>
</dbReference>
<dbReference type="HOGENOM" id="CLU_103507_1_0_4"/>
<dbReference type="OrthoDB" id="9803541at2"/>
<dbReference type="GO" id="GO:0022625">
    <property type="term" value="C:cytosolic large ribosomal subunit"/>
    <property type="evidence" value="ECO:0007669"/>
    <property type="project" value="TreeGrafter"/>
</dbReference>
<dbReference type="GO" id="GO:0003735">
    <property type="term" value="F:structural constituent of ribosome"/>
    <property type="evidence" value="ECO:0007669"/>
    <property type="project" value="InterPro"/>
</dbReference>
<dbReference type="GO" id="GO:0006412">
    <property type="term" value="P:translation"/>
    <property type="evidence" value="ECO:0007669"/>
    <property type="project" value="UniProtKB-UniRule"/>
</dbReference>
<dbReference type="FunFam" id="2.30.30.790:FF:000001">
    <property type="entry name" value="50S ribosomal protein L19"/>
    <property type="match status" value="1"/>
</dbReference>
<dbReference type="Gene3D" id="2.30.30.790">
    <property type="match status" value="1"/>
</dbReference>
<dbReference type="HAMAP" id="MF_00402">
    <property type="entry name" value="Ribosomal_bL19"/>
    <property type="match status" value="1"/>
</dbReference>
<dbReference type="InterPro" id="IPR001857">
    <property type="entry name" value="Ribosomal_bL19"/>
</dbReference>
<dbReference type="InterPro" id="IPR018257">
    <property type="entry name" value="Ribosomal_bL19_CS"/>
</dbReference>
<dbReference type="InterPro" id="IPR038657">
    <property type="entry name" value="Ribosomal_bL19_sf"/>
</dbReference>
<dbReference type="InterPro" id="IPR008991">
    <property type="entry name" value="Translation_prot_SH3-like_sf"/>
</dbReference>
<dbReference type="NCBIfam" id="TIGR01024">
    <property type="entry name" value="rplS_bact"/>
    <property type="match status" value="1"/>
</dbReference>
<dbReference type="PANTHER" id="PTHR15680:SF9">
    <property type="entry name" value="LARGE RIBOSOMAL SUBUNIT PROTEIN BL19M"/>
    <property type="match status" value="1"/>
</dbReference>
<dbReference type="PANTHER" id="PTHR15680">
    <property type="entry name" value="RIBOSOMAL PROTEIN L19"/>
    <property type="match status" value="1"/>
</dbReference>
<dbReference type="Pfam" id="PF01245">
    <property type="entry name" value="Ribosomal_L19"/>
    <property type="match status" value="1"/>
</dbReference>
<dbReference type="PIRSF" id="PIRSF002191">
    <property type="entry name" value="Ribosomal_L19"/>
    <property type="match status" value="1"/>
</dbReference>
<dbReference type="PRINTS" id="PR00061">
    <property type="entry name" value="RIBOSOMALL19"/>
</dbReference>
<dbReference type="SUPFAM" id="SSF50104">
    <property type="entry name" value="Translation proteins SH3-like domain"/>
    <property type="match status" value="1"/>
</dbReference>
<dbReference type="PROSITE" id="PS01015">
    <property type="entry name" value="RIBOSOMAL_L19"/>
    <property type="match status" value="1"/>
</dbReference>
<reference key="1">
    <citation type="journal article" date="2009" name="BMC Genomics">
        <title>Metabolic analysis of the soil microbe Dechloromonas aromatica str. RCB: indications of a surprisingly complex life-style and cryptic anaerobic pathways for aromatic degradation.</title>
        <authorList>
            <person name="Salinero K.K."/>
            <person name="Keller K."/>
            <person name="Feil W.S."/>
            <person name="Feil H."/>
            <person name="Trong S."/>
            <person name="Di Bartolo G."/>
            <person name="Lapidus A."/>
        </authorList>
    </citation>
    <scope>NUCLEOTIDE SEQUENCE [LARGE SCALE GENOMIC DNA]</scope>
    <source>
        <strain>RCB</strain>
    </source>
</reference>
<keyword id="KW-0687">Ribonucleoprotein</keyword>
<keyword id="KW-0689">Ribosomal protein</keyword>
<comment type="function">
    <text evidence="1">This protein is located at the 30S-50S ribosomal subunit interface and may play a role in the structure and function of the aminoacyl-tRNA binding site.</text>
</comment>
<comment type="similarity">
    <text evidence="1">Belongs to the bacterial ribosomal protein bL19 family.</text>
</comment>
<name>RL19_DECAR</name>
<organism>
    <name type="scientific">Dechloromonas aromatica (strain RCB)</name>
    <dbReference type="NCBI Taxonomy" id="159087"/>
    <lineage>
        <taxon>Bacteria</taxon>
        <taxon>Pseudomonadati</taxon>
        <taxon>Pseudomonadota</taxon>
        <taxon>Betaproteobacteria</taxon>
        <taxon>Rhodocyclales</taxon>
        <taxon>Azonexaceae</taxon>
        <taxon>Dechloromonas</taxon>
    </lineage>
</organism>
<feature type="chain" id="PRO_0000226842" description="Large ribosomal subunit protein bL19">
    <location>
        <begin position="1"/>
        <end position="126"/>
    </location>
</feature>
<protein>
    <recommendedName>
        <fullName evidence="1">Large ribosomal subunit protein bL19</fullName>
    </recommendedName>
    <alternativeName>
        <fullName evidence="2">50S ribosomal protein L19</fullName>
    </alternativeName>
</protein>
<gene>
    <name evidence="1" type="primary">rplS</name>
    <name type="ordered locus">Daro_3063</name>
</gene>